<sequence>MDTINQRIGEMLARVRATRPLIHHITNLVVMNDTANVTLHVGGLPVMAHDVEEVAEMVTHAGALVLNVGTLSPDWVESMLVAGRQANELDIPIVLDPVGAGATQLRTMTNLKLLRSLHIGVVRGNGGEIGALSGAGGEMRGVESIAAPENPLTAARTLAQTYRTVVALTGARDIITDGERGFIVSNGHIWLTTLTGTGCMATTMVAAFAAVERDYLLAAAGGLAMFGLAAELAAEKAHGPASFKTALFDQIYNLTPEQVAAGARIAELEW</sequence>
<accession>A7NRF8</accession>
<proteinExistence type="inferred from homology"/>
<reference key="1">
    <citation type="submission" date="2007-08" db="EMBL/GenBank/DDBJ databases">
        <title>Complete sequence of Roseiflexus castenholzii DSM 13941.</title>
        <authorList>
            <consortium name="US DOE Joint Genome Institute"/>
            <person name="Copeland A."/>
            <person name="Lucas S."/>
            <person name="Lapidus A."/>
            <person name="Barry K."/>
            <person name="Glavina del Rio T."/>
            <person name="Dalin E."/>
            <person name="Tice H."/>
            <person name="Pitluck S."/>
            <person name="Thompson L.S."/>
            <person name="Brettin T."/>
            <person name="Bruce D."/>
            <person name="Detter J.C."/>
            <person name="Han C."/>
            <person name="Tapia R."/>
            <person name="Schmutz J."/>
            <person name="Larimer F."/>
            <person name="Land M."/>
            <person name="Hauser L."/>
            <person name="Kyrpides N."/>
            <person name="Mikhailova N."/>
            <person name="Bryant D.A."/>
            <person name="Hanada S."/>
            <person name="Tsukatani Y."/>
            <person name="Richardson P."/>
        </authorList>
    </citation>
    <scope>NUCLEOTIDE SEQUENCE [LARGE SCALE GENOMIC DNA]</scope>
    <source>
        <strain>DSM 13941 / HLO8</strain>
    </source>
</reference>
<protein>
    <recommendedName>
        <fullName evidence="1">Hydroxyethylthiazole kinase</fullName>
        <ecNumber evidence="1">2.7.1.50</ecNumber>
    </recommendedName>
    <alternativeName>
        <fullName evidence="1">4-methyl-5-beta-hydroxyethylthiazole kinase</fullName>
        <shortName evidence="1">TH kinase</shortName>
        <shortName evidence="1">Thz kinase</shortName>
    </alternativeName>
</protein>
<name>THIM_ROSCS</name>
<evidence type="ECO:0000255" key="1">
    <source>
        <dbReference type="HAMAP-Rule" id="MF_00228"/>
    </source>
</evidence>
<comment type="function">
    <text evidence="1">Catalyzes the phosphorylation of the hydroxyl group of 4-methyl-5-beta-hydroxyethylthiazole (THZ).</text>
</comment>
<comment type="catalytic activity">
    <reaction evidence="1">
        <text>5-(2-hydroxyethyl)-4-methylthiazole + ATP = 4-methyl-5-(2-phosphooxyethyl)-thiazole + ADP + H(+)</text>
        <dbReference type="Rhea" id="RHEA:24212"/>
        <dbReference type="ChEBI" id="CHEBI:15378"/>
        <dbReference type="ChEBI" id="CHEBI:17957"/>
        <dbReference type="ChEBI" id="CHEBI:30616"/>
        <dbReference type="ChEBI" id="CHEBI:58296"/>
        <dbReference type="ChEBI" id="CHEBI:456216"/>
        <dbReference type="EC" id="2.7.1.50"/>
    </reaction>
</comment>
<comment type="cofactor">
    <cofactor evidence="1">
        <name>Mg(2+)</name>
        <dbReference type="ChEBI" id="CHEBI:18420"/>
    </cofactor>
</comment>
<comment type="pathway">
    <text evidence="1">Cofactor biosynthesis; thiamine diphosphate biosynthesis; 4-methyl-5-(2-phosphoethyl)-thiazole from 5-(2-hydroxyethyl)-4-methylthiazole: step 1/1.</text>
</comment>
<comment type="similarity">
    <text evidence="1">Belongs to the Thz kinase family.</text>
</comment>
<dbReference type="EC" id="2.7.1.50" evidence="1"/>
<dbReference type="EMBL" id="CP000804">
    <property type="protein sequence ID" value="ABU60154.1"/>
    <property type="molecule type" value="Genomic_DNA"/>
</dbReference>
<dbReference type="RefSeq" id="WP_012122575.1">
    <property type="nucleotide sequence ID" value="NC_009767.1"/>
</dbReference>
<dbReference type="SMR" id="A7NRF8"/>
<dbReference type="STRING" id="383372.Rcas_4122"/>
<dbReference type="KEGG" id="rca:Rcas_4122"/>
<dbReference type="eggNOG" id="COG2145">
    <property type="taxonomic scope" value="Bacteria"/>
</dbReference>
<dbReference type="HOGENOM" id="CLU_019943_0_1_0"/>
<dbReference type="OrthoDB" id="9778146at2"/>
<dbReference type="UniPathway" id="UPA00060">
    <property type="reaction ID" value="UER00139"/>
</dbReference>
<dbReference type="Proteomes" id="UP000000263">
    <property type="component" value="Chromosome"/>
</dbReference>
<dbReference type="GO" id="GO:0005524">
    <property type="term" value="F:ATP binding"/>
    <property type="evidence" value="ECO:0007669"/>
    <property type="project" value="UniProtKB-UniRule"/>
</dbReference>
<dbReference type="GO" id="GO:0004417">
    <property type="term" value="F:hydroxyethylthiazole kinase activity"/>
    <property type="evidence" value="ECO:0007669"/>
    <property type="project" value="UniProtKB-UniRule"/>
</dbReference>
<dbReference type="GO" id="GO:0000287">
    <property type="term" value="F:magnesium ion binding"/>
    <property type="evidence" value="ECO:0007669"/>
    <property type="project" value="UniProtKB-UniRule"/>
</dbReference>
<dbReference type="GO" id="GO:0009228">
    <property type="term" value="P:thiamine biosynthetic process"/>
    <property type="evidence" value="ECO:0007669"/>
    <property type="project" value="UniProtKB-KW"/>
</dbReference>
<dbReference type="GO" id="GO:0009229">
    <property type="term" value="P:thiamine diphosphate biosynthetic process"/>
    <property type="evidence" value="ECO:0007669"/>
    <property type="project" value="UniProtKB-UniRule"/>
</dbReference>
<dbReference type="CDD" id="cd01170">
    <property type="entry name" value="THZ_kinase"/>
    <property type="match status" value="1"/>
</dbReference>
<dbReference type="Gene3D" id="3.40.1190.20">
    <property type="match status" value="1"/>
</dbReference>
<dbReference type="HAMAP" id="MF_00228">
    <property type="entry name" value="Thz_kinase"/>
    <property type="match status" value="1"/>
</dbReference>
<dbReference type="InterPro" id="IPR000417">
    <property type="entry name" value="Hyethyz_kinase"/>
</dbReference>
<dbReference type="InterPro" id="IPR029056">
    <property type="entry name" value="Ribokinase-like"/>
</dbReference>
<dbReference type="NCBIfam" id="NF006830">
    <property type="entry name" value="PRK09355.1"/>
    <property type="match status" value="1"/>
</dbReference>
<dbReference type="NCBIfam" id="TIGR00694">
    <property type="entry name" value="thiM"/>
    <property type="match status" value="1"/>
</dbReference>
<dbReference type="Pfam" id="PF02110">
    <property type="entry name" value="HK"/>
    <property type="match status" value="1"/>
</dbReference>
<dbReference type="PIRSF" id="PIRSF000513">
    <property type="entry name" value="Thz_kinase"/>
    <property type="match status" value="1"/>
</dbReference>
<dbReference type="PRINTS" id="PR01099">
    <property type="entry name" value="HYETHTZKNASE"/>
</dbReference>
<dbReference type="SUPFAM" id="SSF53613">
    <property type="entry name" value="Ribokinase-like"/>
    <property type="match status" value="1"/>
</dbReference>
<gene>
    <name evidence="1" type="primary">thiM</name>
    <name type="ordered locus">Rcas_4122</name>
</gene>
<organism>
    <name type="scientific">Roseiflexus castenholzii (strain DSM 13941 / HLO8)</name>
    <dbReference type="NCBI Taxonomy" id="383372"/>
    <lineage>
        <taxon>Bacteria</taxon>
        <taxon>Bacillati</taxon>
        <taxon>Chloroflexota</taxon>
        <taxon>Chloroflexia</taxon>
        <taxon>Chloroflexales</taxon>
        <taxon>Roseiflexineae</taxon>
        <taxon>Roseiflexaceae</taxon>
        <taxon>Roseiflexus</taxon>
    </lineage>
</organism>
<keyword id="KW-0067">ATP-binding</keyword>
<keyword id="KW-0418">Kinase</keyword>
<keyword id="KW-0460">Magnesium</keyword>
<keyword id="KW-0479">Metal-binding</keyword>
<keyword id="KW-0547">Nucleotide-binding</keyword>
<keyword id="KW-1185">Reference proteome</keyword>
<keyword id="KW-0784">Thiamine biosynthesis</keyword>
<keyword id="KW-0808">Transferase</keyword>
<feature type="chain" id="PRO_0000336567" description="Hydroxyethylthiazole kinase">
    <location>
        <begin position="1"/>
        <end position="270"/>
    </location>
</feature>
<feature type="binding site" evidence="1">
    <location>
        <position position="47"/>
    </location>
    <ligand>
        <name>substrate</name>
    </ligand>
</feature>
<feature type="binding site" evidence="1">
    <location>
        <position position="123"/>
    </location>
    <ligand>
        <name>ATP</name>
        <dbReference type="ChEBI" id="CHEBI:30616"/>
    </ligand>
</feature>
<feature type="binding site" evidence="1">
    <location>
        <position position="169"/>
    </location>
    <ligand>
        <name>ATP</name>
        <dbReference type="ChEBI" id="CHEBI:30616"/>
    </ligand>
</feature>
<feature type="binding site" evidence="1">
    <location>
        <position position="196"/>
    </location>
    <ligand>
        <name>substrate</name>
    </ligand>
</feature>